<sequence length="304" mass="32227">MNRLAVEIPGLSLKNPIMPASGCFGFGQEYSKYYDLNKLGAIMAKAVTPEPRLGNPTPRVAETASGMLNAIGLQNPGLEHVLAHELPFLEQFETPIIANVAGATEDDYVEVCSRIGESKAVKAIELNISCPNVKHGGIAFGTDPEVAHRLTKAVKSVASVPVYVKLSPNVADIVSIAQAIEAAGADGLTMINTLLGMRIDLKTRKPIIANGTGGLSGPAIKPVAIRMIHQVRSVSNIPIIGMGGVQTVDDVLEFLIAGADAVAVGTMNFTDPFICPKLITELPIRMDELGISSLQELKKERANQ</sequence>
<proteinExistence type="inferred from homology"/>
<name>PYRDB_LISW6</name>
<organism>
    <name type="scientific">Listeria welshimeri serovar 6b (strain ATCC 35897 / DSM 20650 / CCUG 15529 / CIP 8149 / NCTC 11857 / SLCC 5334 / V8)</name>
    <dbReference type="NCBI Taxonomy" id="386043"/>
    <lineage>
        <taxon>Bacteria</taxon>
        <taxon>Bacillati</taxon>
        <taxon>Bacillota</taxon>
        <taxon>Bacilli</taxon>
        <taxon>Bacillales</taxon>
        <taxon>Listeriaceae</taxon>
        <taxon>Listeria</taxon>
    </lineage>
</organism>
<keyword id="KW-0963">Cytoplasm</keyword>
<keyword id="KW-0285">Flavoprotein</keyword>
<keyword id="KW-0288">FMN</keyword>
<keyword id="KW-0520">NAD</keyword>
<keyword id="KW-0560">Oxidoreductase</keyword>
<keyword id="KW-0665">Pyrimidine biosynthesis</keyword>
<accession>A0AJT8</accession>
<dbReference type="EC" id="1.3.1.14"/>
<dbReference type="EMBL" id="AM263198">
    <property type="protein sequence ID" value="CAK21270.1"/>
    <property type="molecule type" value="Genomic_DNA"/>
</dbReference>
<dbReference type="RefSeq" id="WP_011702622.1">
    <property type="nucleotide sequence ID" value="NC_008555.1"/>
</dbReference>
<dbReference type="SMR" id="A0AJT8"/>
<dbReference type="STRING" id="386043.lwe1852"/>
<dbReference type="GeneID" id="61189753"/>
<dbReference type="KEGG" id="lwe:lwe1852"/>
<dbReference type="eggNOG" id="COG0167">
    <property type="taxonomic scope" value="Bacteria"/>
</dbReference>
<dbReference type="HOGENOM" id="CLU_042042_0_0_9"/>
<dbReference type="OrthoDB" id="9794954at2"/>
<dbReference type="UniPathway" id="UPA00070">
    <property type="reaction ID" value="UER00945"/>
</dbReference>
<dbReference type="Proteomes" id="UP000000779">
    <property type="component" value="Chromosome"/>
</dbReference>
<dbReference type="GO" id="GO:0005737">
    <property type="term" value="C:cytoplasm"/>
    <property type="evidence" value="ECO:0007669"/>
    <property type="project" value="UniProtKB-SubCell"/>
</dbReference>
<dbReference type="GO" id="GO:0004589">
    <property type="term" value="F:dihydroorotate dehydrogenase (NAD+) activity"/>
    <property type="evidence" value="ECO:0007669"/>
    <property type="project" value="UniProtKB-EC"/>
</dbReference>
<dbReference type="GO" id="GO:0006207">
    <property type="term" value="P:'de novo' pyrimidine nucleobase biosynthetic process"/>
    <property type="evidence" value="ECO:0007669"/>
    <property type="project" value="InterPro"/>
</dbReference>
<dbReference type="GO" id="GO:0044205">
    <property type="term" value="P:'de novo' UMP biosynthetic process"/>
    <property type="evidence" value="ECO:0007669"/>
    <property type="project" value="UniProtKB-UniRule"/>
</dbReference>
<dbReference type="CDD" id="cd04740">
    <property type="entry name" value="DHOD_1B_like"/>
    <property type="match status" value="1"/>
</dbReference>
<dbReference type="FunFam" id="3.20.20.70:FF:000069">
    <property type="entry name" value="Dihydroorotate dehydrogenase"/>
    <property type="match status" value="1"/>
</dbReference>
<dbReference type="Gene3D" id="3.20.20.70">
    <property type="entry name" value="Aldolase class I"/>
    <property type="match status" value="1"/>
</dbReference>
<dbReference type="HAMAP" id="MF_00224">
    <property type="entry name" value="DHO_dh_type1"/>
    <property type="match status" value="1"/>
</dbReference>
<dbReference type="InterPro" id="IPR013785">
    <property type="entry name" value="Aldolase_TIM"/>
</dbReference>
<dbReference type="InterPro" id="IPR050074">
    <property type="entry name" value="DHO_dehydrogenase"/>
</dbReference>
<dbReference type="InterPro" id="IPR033888">
    <property type="entry name" value="DHOD_1B"/>
</dbReference>
<dbReference type="InterPro" id="IPR024920">
    <property type="entry name" value="Dihydroorotate_DH_1"/>
</dbReference>
<dbReference type="InterPro" id="IPR012135">
    <property type="entry name" value="Dihydroorotate_DH_1_2"/>
</dbReference>
<dbReference type="InterPro" id="IPR005720">
    <property type="entry name" value="Dihydroorotate_DH_cat"/>
</dbReference>
<dbReference type="InterPro" id="IPR001295">
    <property type="entry name" value="Dihydroorotate_DH_CS"/>
</dbReference>
<dbReference type="InterPro" id="IPR049622">
    <property type="entry name" value="Dihydroorotate_DH_I"/>
</dbReference>
<dbReference type="NCBIfam" id="NF005574">
    <property type="entry name" value="PRK07259.1"/>
    <property type="match status" value="1"/>
</dbReference>
<dbReference type="NCBIfam" id="TIGR01037">
    <property type="entry name" value="pyrD_sub1_fam"/>
    <property type="match status" value="1"/>
</dbReference>
<dbReference type="PANTHER" id="PTHR48109:SF1">
    <property type="entry name" value="DIHYDROOROTATE DEHYDROGENASE (FUMARATE)"/>
    <property type="match status" value="1"/>
</dbReference>
<dbReference type="PANTHER" id="PTHR48109">
    <property type="entry name" value="DIHYDROOROTATE DEHYDROGENASE (QUINONE), MITOCHONDRIAL-RELATED"/>
    <property type="match status" value="1"/>
</dbReference>
<dbReference type="Pfam" id="PF01180">
    <property type="entry name" value="DHO_dh"/>
    <property type="match status" value="1"/>
</dbReference>
<dbReference type="PIRSF" id="PIRSF000164">
    <property type="entry name" value="DHO_oxidase"/>
    <property type="match status" value="1"/>
</dbReference>
<dbReference type="SUPFAM" id="SSF51395">
    <property type="entry name" value="FMN-linked oxidoreductases"/>
    <property type="match status" value="1"/>
</dbReference>
<dbReference type="PROSITE" id="PS00911">
    <property type="entry name" value="DHODEHASE_1"/>
    <property type="match status" value="1"/>
</dbReference>
<dbReference type="PROSITE" id="PS00912">
    <property type="entry name" value="DHODEHASE_2"/>
    <property type="match status" value="1"/>
</dbReference>
<comment type="function">
    <text evidence="1">Catalyzes the conversion of dihydroorotate to orotate with NAD(+) as electron acceptor.</text>
</comment>
<comment type="catalytic activity">
    <reaction>
        <text>(S)-dihydroorotate + NAD(+) = orotate + NADH + H(+)</text>
        <dbReference type="Rhea" id="RHEA:13513"/>
        <dbReference type="ChEBI" id="CHEBI:15378"/>
        <dbReference type="ChEBI" id="CHEBI:30839"/>
        <dbReference type="ChEBI" id="CHEBI:30864"/>
        <dbReference type="ChEBI" id="CHEBI:57540"/>
        <dbReference type="ChEBI" id="CHEBI:57945"/>
        <dbReference type="EC" id="1.3.1.14"/>
    </reaction>
</comment>
<comment type="cofactor">
    <cofactor evidence="1">
        <name>FMN</name>
        <dbReference type="ChEBI" id="CHEBI:58210"/>
    </cofactor>
    <text evidence="1">Binds 1 FMN per subunit.</text>
</comment>
<comment type="pathway">
    <text>Pyrimidine metabolism; UMP biosynthesis via de novo pathway; orotate from (S)-dihydroorotate (NAD(+) route): step 1/1.</text>
</comment>
<comment type="subunit">
    <text evidence="1">Heterotetramer of 2 PyrK and 2 PyrD type B subunits.</text>
</comment>
<comment type="subcellular location">
    <subcellularLocation>
        <location evidence="1">Cytoplasm</location>
    </subcellularLocation>
</comment>
<comment type="similarity">
    <text evidence="2">Belongs to the dihydroorotate dehydrogenase family. Type 1 subfamily.</text>
</comment>
<evidence type="ECO:0000250" key="1"/>
<evidence type="ECO:0000305" key="2"/>
<feature type="chain" id="PRO_1000024138" description="Dihydroorotate dehydrogenase B (NAD(+)), catalytic subunit">
    <location>
        <begin position="1"/>
        <end position="304"/>
    </location>
</feature>
<feature type="active site" description="Nucleophile">
    <location>
        <position position="130"/>
    </location>
</feature>
<feature type="binding site" evidence="1">
    <location>
        <position position="21"/>
    </location>
    <ligand>
        <name>FMN</name>
        <dbReference type="ChEBI" id="CHEBI:58210"/>
    </ligand>
</feature>
<feature type="binding site" evidence="1">
    <location>
        <begin position="45"/>
        <end position="46"/>
    </location>
    <ligand>
        <name>FMN</name>
        <dbReference type="ChEBI" id="CHEBI:58210"/>
    </ligand>
</feature>
<feature type="binding site" evidence="1">
    <location>
        <position position="45"/>
    </location>
    <ligand>
        <name>substrate</name>
    </ligand>
</feature>
<feature type="binding site" evidence="1">
    <location>
        <begin position="69"/>
        <end position="73"/>
    </location>
    <ligand>
        <name>substrate</name>
    </ligand>
</feature>
<feature type="binding site" evidence="1">
    <location>
        <position position="99"/>
    </location>
    <ligand>
        <name>FMN</name>
        <dbReference type="ChEBI" id="CHEBI:58210"/>
    </ligand>
</feature>
<feature type="binding site" evidence="1">
    <location>
        <position position="127"/>
    </location>
    <ligand>
        <name>FMN</name>
        <dbReference type="ChEBI" id="CHEBI:58210"/>
    </ligand>
</feature>
<feature type="binding site" evidence="1">
    <location>
        <position position="127"/>
    </location>
    <ligand>
        <name>substrate</name>
    </ligand>
</feature>
<feature type="binding site" evidence="1">
    <location>
        <position position="165"/>
    </location>
    <ligand>
        <name>FMN</name>
        <dbReference type="ChEBI" id="CHEBI:58210"/>
    </ligand>
</feature>
<feature type="binding site" evidence="1">
    <location>
        <position position="191"/>
    </location>
    <ligand>
        <name>FMN</name>
        <dbReference type="ChEBI" id="CHEBI:58210"/>
    </ligand>
</feature>
<feature type="binding site" evidence="1">
    <location>
        <begin position="192"/>
        <end position="193"/>
    </location>
    <ligand>
        <name>substrate</name>
    </ligand>
</feature>
<feature type="binding site" evidence="1">
    <location>
        <position position="217"/>
    </location>
    <ligand>
        <name>FMN</name>
        <dbReference type="ChEBI" id="CHEBI:58210"/>
    </ligand>
</feature>
<feature type="binding site" evidence="1">
    <location>
        <begin position="243"/>
        <end position="244"/>
    </location>
    <ligand>
        <name>FMN</name>
        <dbReference type="ChEBI" id="CHEBI:58210"/>
    </ligand>
</feature>
<feature type="binding site" evidence="1">
    <location>
        <begin position="265"/>
        <end position="266"/>
    </location>
    <ligand>
        <name>FMN</name>
        <dbReference type="ChEBI" id="CHEBI:58210"/>
    </ligand>
</feature>
<protein>
    <recommendedName>
        <fullName>Dihydroorotate dehydrogenase B (NAD(+)), catalytic subunit</fullName>
        <shortName>DHOD B</shortName>
        <shortName>DHODase B</shortName>
        <shortName>DHOdehase B</shortName>
        <ecNumber>1.3.1.14</ecNumber>
    </recommendedName>
    <alternativeName>
        <fullName>Dihydroorotate oxidase B</fullName>
    </alternativeName>
    <alternativeName>
        <fullName>Orotate reductase (NADH)</fullName>
    </alternativeName>
</protein>
<reference key="1">
    <citation type="journal article" date="2006" name="J. Bacteriol.">
        <title>Whole-genome sequence of Listeria welshimeri reveals common steps in genome reduction with Listeria innocua as compared to Listeria monocytogenes.</title>
        <authorList>
            <person name="Hain T."/>
            <person name="Steinweg C."/>
            <person name="Kuenne C.T."/>
            <person name="Billion A."/>
            <person name="Ghai R."/>
            <person name="Chatterjee S.S."/>
            <person name="Domann E."/>
            <person name="Kaerst U."/>
            <person name="Goesmann A."/>
            <person name="Bekel T."/>
            <person name="Bartels D."/>
            <person name="Kaiser O."/>
            <person name="Meyer F."/>
            <person name="Puehler A."/>
            <person name="Weisshaar B."/>
            <person name="Wehland J."/>
            <person name="Liang C."/>
            <person name="Dandekar T."/>
            <person name="Lampidis R."/>
            <person name="Kreft J."/>
            <person name="Goebel W."/>
            <person name="Chakraborty T."/>
        </authorList>
    </citation>
    <scope>NUCLEOTIDE SEQUENCE [LARGE SCALE GENOMIC DNA]</scope>
    <source>
        <strain>ATCC 35897 / DSM 20650 / CCUG 15529 / CIP 8149 / NCTC 11857 / SLCC 5334 / V8</strain>
    </source>
</reference>
<gene>
    <name type="primary">pyrD</name>
    <name type="ordered locus">lwe1852</name>
</gene>